<reference key="1">
    <citation type="journal article" date="2007" name="Nat. Biotechnol.">
        <title>Complete genome sequence of the erythromycin-producing bacterium Saccharopolyspora erythraea NRRL23338.</title>
        <authorList>
            <person name="Oliynyk M."/>
            <person name="Samborskyy M."/>
            <person name="Lester J.B."/>
            <person name="Mironenko T."/>
            <person name="Scott N."/>
            <person name="Dickens S."/>
            <person name="Haydock S.F."/>
            <person name="Leadlay P.F."/>
        </authorList>
    </citation>
    <scope>NUCLEOTIDE SEQUENCE [LARGE SCALE GENOMIC DNA]</scope>
    <source>
        <strain>ATCC 11635 / DSM 40517 / JCM 4748 / NBRC 13426 / NCIMB 8594 / NRRL 2338</strain>
    </source>
</reference>
<name>PAND_SACEN</name>
<proteinExistence type="inferred from homology"/>
<dbReference type="EC" id="4.1.1.11" evidence="1"/>
<dbReference type="EMBL" id="AM420293">
    <property type="protein sequence ID" value="CAL99755.1"/>
    <property type="molecule type" value="Genomic_DNA"/>
</dbReference>
<dbReference type="RefSeq" id="WP_009946423.1">
    <property type="nucleotide sequence ID" value="NC_009142.1"/>
</dbReference>
<dbReference type="SMR" id="A4F6T1"/>
<dbReference type="STRING" id="405948.SACE_0407"/>
<dbReference type="KEGG" id="sen:SACE_0407"/>
<dbReference type="eggNOG" id="COG0853">
    <property type="taxonomic scope" value="Bacteria"/>
</dbReference>
<dbReference type="HOGENOM" id="CLU_115305_0_0_11"/>
<dbReference type="OrthoDB" id="9803983at2"/>
<dbReference type="UniPathway" id="UPA00028">
    <property type="reaction ID" value="UER00002"/>
</dbReference>
<dbReference type="Proteomes" id="UP000006728">
    <property type="component" value="Chromosome"/>
</dbReference>
<dbReference type="GO" id="GO:0005829">
    <property type="term" value="C:cytosol"/>
    <property type="evidence" value="ECO:0007669"/>
    <property type="project" value="TreeGrafter"/>
</dbReference>
<dbReference type="GO" id="GO:0004068">
    <property type="term" value="F:aspartate 1-decarboxylase activity"/>
    <property type="evidence" value="ECO:0007669"/>
    <property type="project" value="UniProtKB-UniRule"/>
</dbReference>
<dbReference type="GO" id="GO:0006523">
    <property type="term" value="P:alanine biosynthetic process"/>
    <property type="evidence" value="ECO:0007669"/>
    <property type="project" value="InterPro"/>
</dbReference>
<dbReference type="GO" id="GO:0015940">
    <property type="term" value="P:pantothenate biosynthetic process"/>
    <property type="evidence" value="ECO:0007669"/>
    <property type="project" value="UniProtKB-UniRule"/>
</dbReference>
<dbReference type="CDD" id="cd06919">
    <property type="entry name" value="Asp_decarbox"/>
    <property type="match status" value="1"/>
</dbReference>
<dbReference type="Gene3D" id="2.40.40.20">
    <property type="match status" value="1"/>
</dbReference>
<dbReference type="HAMAP" id="MF_00446">
    <property type="entry name" value="PanD"/>
    <property type="match status" value="1"/>
</dbReference>
<dbReference type="InterPro" id="IPR009010">
    <property type="entry name" value="Asp_de-COase-like_dom_sf"/>
</dbReference>
<dbReference type="InterPro" id="IPR003190">
    <property type="entry name" value="Asp_decarbox"/>
</dbReference>
<dbReference type="NCBIfam" id="TIGR00223">
    <property type="entry name" value="panD"/>
    <property type="match status" value="1"/>
</dbReference>
<dbReference type="PANTHER" id="PTHR21012">
    <property type="entry name" value="ASPARTATE 1-DECARBOXYLASE"/>
    <property type="match status" value="1"/>
</dbReference>
<dbReference type="PANTHER" id="PTHR21012:SF0">
    <property type="entry name" value="ASPARTATE 1-DECARBOXYLASE"/>
    <property type="match status" value="1"/>
</dbReference>
<dbReference type="Pfam" id="PF02261">
    <property type="entry name" value="Asp_decarbox"/>
    <property type="match status" value="1"/>
</dbReference>
<dbReference type="SUPFAM" id="SSF50692">
    <property type="entry name" value="ADC-like"/>
    <property type="match status" value="1"/>
</dbReference>
<comment type="function">
    <text evidence="1">Catalyzes the pyruvoyl-dependent decarboxylation of aspartate to produce beta-alanine.</text>
</comment>
<comment type="catalytic activity">
    <reaction evidence="1">
        <text>L-aspartate + H(+) = beta-alanine + CO2</text>
        <dbReference type="Rhea" id="RHEA:19497"/>
        <dbReference type="ChEBI" id="CHEBI:15378"/>
        <dbReference type="ChEBI" id="CHEBI:16526"/>
        <dbReference type="ChEBI" id="CHEBI:29991"/>
        <dbReference type="ChEBI" id="CHEBI:57966"/>
        <dbReference type="EC" id="4.1.1.11"/>
    </reaction>
</comment>
<comment type="cofactor">
    <cofactor evidence="1">
        <name>pyruvate</name>
        <dbReference type="ChEBI" id="CHEBI:15361"/>
    </cofactor>
    <text evidence="1">Binds 1 pyruvoyl group covalently per subunit.</text>
</comment>
<comment type="pathway">
    <text evidence="1">Cofactor biosynthesis; (R)-pantothenate biosynthesis; beta-alanine from L-aspartate: step 1/1.</text>
</comment>
<comment type="subunit">
    <text evidence="1">Heterooctamer of four alpha and four beta subunits.</text>
</comment>
<comment type="subcellular location">
    <subcellularLocation>
        <location evidence="1">Cytoplasm</location>
    </subcellularLocation>
</comment>
<comment type="PTM">
    <text evidence="1">Is synthesized initially as an inactive proenzyme, which is activated by self-cleavage at a specific serine bond to produce a beta-subunit with a hydroxyl group at its C-terminus and an alpha-subunit with a pyruvoyl group at its N-terminus.</text>
</comment>
<comment type="similarity">
    <text evidence="1">Belongs to the PanD family.</text>
</comment>
<accession>A4F6T1</accession>
<evidence type="ECO:0000255" key="1">
    <source>
        <dbReference type="HAMAP-Rule" id="MF_00446"/>
    </source>
</evidence>
<feature type="chain" id="PRO_0000307067" description="Aspartate 1-decarboxylase beta chain" evidence="1">
    <location>
        <begin position="1"/>
        <end position="24"/>
    </location>
</feature>
<feature type="chain" id="PRO_0000307068" description="Aspartate 1-decarboxylase alpha chain" evidence="1">
    <location>
        <begin position="25"/>
        <end position="163"/>
    </location>
</feature>
<feature type="active site" description="Schiff-base intermediate with substrate; via pyruvic acid" evidence="1">
    <location>
        <position position="25"/>
    </location>
</feature>
<feature type="active site" description="Proton donor" evidence="1">
    <location>
        <position position="58"/>
    </location>
</feature>
<feature type="binding site" evidence="1">
    <location>
        <position position="57"/>
    </location>
    <ligand>
        <name>substrate</name>
    </ligand>
</feature>
<feature type="binding site" evidence="1">
    <location>
        <begin position="73"/>
        <end position="75"/>
    </location>
    <ligand>
        <name>substrate</name>
    </ligand>
</feature>
<feature type="modified residue" description="Pyruvic acid (Ser)" evidence="1">
    <location>
        <position position="25"/>
    </location>
</feature>
<organism>
    <name type="scientific">Saccharopolyspora erythraea (strain ATCC 11635 / DSM 40517 / JCM 4748 / NBRC 13426 / NCIMB 8594 / NRRL 2338)</name>
    <dbReference type="NCBI Taxonomy" id="405948"/>
    <lineage>
        <taxon>Bacteria</taxon>
        <taxon>Bacillati</taxon>
        <taxon>Actinomycetota</taxon>
        <taxon>Actinomycetes</taxon>
        <taxon>Pseudonocardiales</taxon>
        <taxon>Pseudonocardiaceae</taxon>
        <taxon>Saccharopolyspora</taxon>
    </lineage>
</organism>
<gene>
    <name evidence="1" type="primary">panD</name>
    <name type="ordered locus">SACE_0407</name>
</gene>
<protein>
    <recommendedName>
        <fullName evidence="1">Aspartate 1-decarboxylase</fullName>
        <ecNumber evidence="1">4.1.1.11</ecNumber>
    </recommendedName>
    <alternativeName>
        <fullName evidence="1">Aspartate alpha-decarboxylase</fullName>
    </alternativeName>
    <component>
        <recommendedName>
            <fullName evidence="1">Aspartate 1-decarboxylase beta chain</fullName>
        </recommendedName>
    </component>
    <component>
        <recommendedName>
            <fullName evidence="1">Aspartate 1-decarboxylase alpha chain</fullName>
        </recommendedName>
    </component>
</protein>
<keyword id="KW-0068">Autocatalytic cleavage</keyword>
<keyword id="KW-0963">Cytoplasm</keyword>
<keyword id="KW-0210">Decarboxylase</keyword>
<keyword id="KW-0456">Lyase</keyword>
<keyword id="KW-0566">Pantothenate biosynthesis</keyword>
<keyword id="KW-0670">Pyruvate</keyword>
<keyword id="KW-1185">Reference proteome</keyword>
<keyword id="KW-0704">Schiff base</keyword>
<keyword id="KW-0865">Zymogen</keyword>
<sequence>MFRTMLKSKIHRATVTQADLHYVGSVTVDADLMDAADLLEGEQVAIVDVTNGARLETYVITGERGSGVIGINGAAAHLIEPGDLVILISYGVMDELEARSVRPKVIFVDADNRIVERGQDPGHAPAGSGLAGTAASVTSAITEAAAETDDAAKLDALLQQPEH</sequence>